<organism>
    <name type="scientific">Arabidopsis thaliana</name>
    <name type="common">Mouse-ear cress</name>
    <dbReference type="NCBI Taxonomy" id="3702"/>
    <lineage>
        <taxon>Eukaryota</taxon>
        <taxon>Viridiplantae</taxon>
        <taxon>Streptophyta</taxon>
        <taxon>Embryophyta</taxon>
        <taxon>Tracheophyta</taxon>
        <taxon>Spermatophyta</taxon>
        <taxon>Magnoliopsida</taxon>
        <taxon>eudicotyledons</taxon>
        <taxon>Gunneridae</taxon>
        <taxon>Pentapetalae</taxon>
        <taxon>rosids</taxon>
        <taxon>malvids</taxon>
        <taxon>Brassicales</taxon>
        <taxon>Brassicaceae</taxon>
        <taxon>Camelineae</taxon>
        <taxon>Arabidopsis</taxon>
    </lineage>
</organism>
<sequence length="1437" mass="162713">MMDTSKDDDMEIASSSGSRRYDVFPSFRGEDVRDSFLSHLLKELRGKAITFIDDEIERSRSIGPELLSAIKESRIAIVIFSKNYASSTWCLNELVEIHKCYTNLNQMVIPIFFHVDASEVKKQTGEFGKVFEETCKAKSEDEKQSWKQALAAVAVMAGYDLRKWPSEAAMIEELAEDVLRKTMTPSDDFGDLVGIENHIEAIKSVLCLESKEARIMVGIWGQSGIGKSTIGRALYSKLSIQFHHRAFITYKSTSGSDVSGMKLRWEKELLSEILGQKDIKIEHFGVVEQRLKQQKVLILLDDVDSLEFLKTLVGKAEWFGSGSRIIVITQDRQLLKAHEIDLIYEVEFPSEHLALTMLCRSAFGKDSPPDDFKELAFEVAKLAGNLPLGLSVLGSSLKGRTKEWWMEMMPRLRNGLNGDIMKTLRVSYDRLHQKDQDMFLYIACLFNGFEVSYVKDLLKDNVGFTMLTEKSLIRITPDGYIEMHNLLEKLGREIDRAKSKGNPGKRRFLTNFEDIHEVVTEKTGTETLLGIRLPFEEYFSTRPLLIDKESFKGMRNLQYLEIGYYGDLPQSLVYLPLKLRLLDWDDCPLKSLPSTFKAEYLVNLIMKYSKLEKLWEGTLPLGSLKEMNLRYSNNLKEIPDLSLAINLEELDLVGCKSLVTLPSSIQNATKLIYLDMSDCKKLESFPTDLNLESLEYLNLTGCPNLRNFPAIKMGCSDVDFPEGRNEIVVEDCFWNKNLPAGLDYLDCLTRCMPCEFRPEQLAFLNVRGYKHEKLWEGIQSLGSLEGMDLSESENLTEIPDLSKATKLESLILNNCKSLVTLPSTIGNLHRLVRLEMKECTGLEVLPTDVNLSSLETLDLSGCSSLRSFPLISTNIVWLYLENTAIEEIPSTIGNLHRLVRLEMKKCTGLEVLPTDVNLSSLETLDLSGCSSLRSFPLISESIKWLYLENTAIEEIPDLSKATNLKNLKLNNCKSLVTLPTTIGNLQKLVSFEMKECTGLEVLPIDVNLSSLMILDLSGCSSLRTFPLISTNIVWLYLENTAIEEIPSTIGNLHRLVKLEMKECTGLEVLPTDVNLSSLMILDLSGCSSLRTFPLISTRIECLYLQNTAIEEVPCCIEDFTRLTVLMMYCCQRLKTISPNIFRLTRLELADFTDCRGVIKALSDATVVATMEDHVSCVPLSENIEYIWDKLYRVAYLQEHFSFRNCFKLDRDARELILRSCFKPVALPGEEIPKYFTYRAYGDSLTVIVPQSSLSQNFLRFKACVVVEPLSKGKGFYPFLKVNVGFNGKQYQKSFSKDAELELCKTDHLFFCSFKFRSEDLPSKLNFNDVEFKFCCSNRIKECGVRLMYVSQEENNQQTTRSEKRMRMTSGTSEEDINLPYGLIVADTGLAALNMELSLGQGEPSSSTSLEGEALCVDYMITEEQDKGIPILFPVSGN</sequence>
<dbReference type="EC" id="3.2.2.6" evidence="22"/>
<dbReference type="EMBL" id="Z97342">
    <property type="protein sequence ID" value="CAB46044.1"/>
    <property type="status" value="ALT_SEQ"/>
    <property type="molecule type" value="Genomic_DNA"/>
</dbReference>
<dbReference type="EMBL" id="AL161545">
    <property type="protein sequence ID" value="CAB80960.1"/>
    <property type="status" value="ALT_SEQ"/>
    <property type="molecule type" value="Genomic_DNA"/>
</dbReference>
<dbReference type="EMBL" id="CP002687">
    <property type="protein sequence ID" value="AEE83820.2"/>
    <property type="molecule type" value="Genomic_DNA"/>
</dbReference>
<dbReference type="PIR" id="D85188">
    <property type="entry name" value="D85188"/>
</dbReference>
<dbReference type="PIR" id="H71436">
    <property type="entry name" value="H71436"/>
</dbReference>
<dbReference type="RefSeq" id="NP_001319970.1">
    <molecule id="O23530-2"/>
    <property type="nucleotide sequence ID" value="NM_001341145.1"/>
</dbReference>
<dbReference type="PDB" id="5H3C">
    <property type="method" value="X-ray"/>
    <property type="resolution" value="2.60 A"/>
    <property type="chains" value="A/B=17-190"/>
</dbReference>
<dbReference type="PDB" id="5TEC">
    <property type="method" value="X-ray"/>
    <property type="resolution" value="2.20 A"/>
    <property type="chains" value="A/B=17-190"/>
</dbReference>
<dbReference type="PDBsum" id="5H3C"/>
<dbReference type="PDBsum" id="5TEC"/>
<dbReference type="SMR" id="O23530"/>
<dbReference type="BioGRID" id="12690">
    <property type="interactions" value="6"/>
</dbReference>
<dbReference type="DIP" id="DIP-59360N"/>
<dbReference type="FunCoup" id="O23530">
    <property type="interactions" value="79"/>
</dbReference>
<dbReference type="IntAct" id="O23530">
    <property type="interactions" value="3"/>
</dbReference>
<dbReference type="STRING" id="3702.O23530"/>
<dbReference type="iPTMnet" id="O23530"/>
<dbReference type="PaxDb" id="3702-AT4G16890.1"/>
<dbReference type="ProteomicsDB" id="232546">
    <molecule id="O23530-2"/>
</dbReference>
<dbReference type="EnsemblPlants" id="AT4G16890.1">
    <molecule id="O23530-2"/>
    <property type="protein sequence ID" value="AT4G16890.1"/>
    <property type="gene ID" value="AT4G16890"/>
</dbReference>
<dbReference type="GeneID" id="827397"/>
<dbReference type="Gramene" id="AT4G16890.1">
    <molecule id="O23530-2"/>
    <property type="protein sequence ID" value="AT4G16890.1"/>
    <property type="gene ID" value="AT4G16890"/>
</dbReference>
<dbReference type="KEGG" id="ath:AT4G16890"/>
<dbReference type="Araport" id="AT4G16890"/>
<dbReference type="TAIR" id="AT4G16890">
    <property type="gene designation" value="SNC1"/>
</dbReference>
<dbReference type="eggNOG" id="ENOG502QQJE">
    <property type="taxonomic scope" value="Eukaryota"/>
</dbReference>
<dbReference type="HOGENOM" id="CLU_001561_0_1_1"/>
<dbReference type="InParanoid" id="O23530"/>
<dbReference type="PRO" id="PR:O23530"/>
<dbReference type="Proteomes" id="UP000006548">
    <property type="component" value="Chromosome 4"/>
</dbReference>
<dbReference type="ExpressionAtlas" id="O23530">
    <property type="expression patterns" value="baseline and differential"/>
</dbReference>
<dbReference type="GO" id="GO:0005737">
    <property type="term" value="C:cytoplasm"/>
    <property type="evidence" value="ECO:0000314"/>
    <property type="project" value="TAIR"/>
</dbReference>
<dbReference type="GO" id="GO:0005829">
    <property type="term" value="C:cytosol"/>
    <property type="evidence" value="ECO:0000314"/>
    <property type="project" value="TAIR"/>
</dbReference>
<dbReference type="GO" id="GO:0005783">
    <property type="term" value="C:endoplasmic reticulum"/>
    <property type="evidence" value="ECO:0007669"/>
    <property type="project" value="UniProtKB-KW"/>
</dbReference>
<dbReference type="GO" id="GO:0043231">
    <property type="term" value="C:intracellular membrane-bounded organelle"/>
    <property type="evidence" value="ECO:0000314"/>
    <property type="project" value="TAIR"/>
</dbReference>
<dbReference type="GO" id="GO:0005634">
    <property type="term" value="C:nucleus"/>
    <property type="evidence" value="ECO:0000314"/>
    <property type="project" value="TAIR"/>
</dbReference>
<dbReference type="GO" id="GO:0043531">
    <property type="term" value="F:ADP binding"/>
    <property type="evidence" value="ECO:0007669"/>
    <property type="project" value="InterPro"/>
</dbReference>
<dbReference type="GO" id="GO:0005524">
    <property type="term" value="F:ATP binding"/>
    <property type="evidence" value="ECO:0007669"/>
    <property type="project" value="UniProtKB-KW"/>
</dbReference>
<dbReference type="GO" id="GO:0061809">
    <property type="term" value="F:NAD+ nucleosidase activity, cyclic ADP-ribose generating"/>
    <property type="evidence" value="ECO:0007669"/>
    <property type="project" value="UniProtKB-EC"/>
</dbReference>
<dbReference type="GO" id="GO:0000166">
    <property type="term" value="F:nucleotide binding"/>
    <property type="evidence" value="ECO:0000250"/>
    <property type="project" value="TAIR"/>
</dbReference>
<dbReference type="GO" id="GO:0042742">
    <property type="term" value="P:defense response to bacterium"/>
    <property type="evidence" value="ECO:0000315"/>
    <property type="project" value="TAIR"/>
</dbReference>
<dbReference type="GO" id="GO:0009733">
    <property type="term" value="P:response to auxin"/>
    <property type="evidence" value="ECO:0000316"/>
    <property type="project" value="TAIR"/>
</dbReference>
<dbReference type="GO" id="GO:0009862">
    <property type="term" value="P:systemic acquired resistance, salicylic acid mediated signaling pathway"/>
    <property type="evidence" value="ECO:0000315"/>
    <property type="project" value="TAIR"/>
</dbReference>
<dbReference type="FunFam" id="1.10.8.430:FF:000002">
    <property type="entry name" value="Disease resistance protein (TIR-NBS-LRR class)"/>
    <property type="match status" value="1"/>
</dbReference>
<dbReference type="FunFam" id="3.40.50.10140:FF:000007">
    <property type="entry name" value="Disease resistance protein (TIR-NBS-LRR class)"/>
    <property type="match status" value="1"/>
</dbReference>
<dbReference type="FunFam" id="3.40.50.300:FF:001002">
    <property type="entry name" value="Disease resistance protein (TIR-NBS-LRR class)"/>
    <property type="match status" value="1"/>
</dbReference>
<dbReference type="FunFam" id="3.80.10.10:FF:000359">
    <property type="entry name" value="Disease resistance protein (TIR-NBS-LRR class) family"/>
    <property type="match status" value="1"/>
</dbReference>
<dbReference type="FunFam" id="3.80.10.10:FF:001175">
    <property type="entry name" value="Disease resistance protein (TIR-NBS-LRR class) family"/>
    <property type="match status" value="1"/>
</dbReference>
<dbReference type="Gene3D" id="1.10.8.430">
    <property type="entry name" value="Helical domain of apoptotic protease-activating factors"/>
    <property type="match status" value="1"/>
</dbReference>
<dbReference type="Gene3D" id="3.40.50.300">
    <property type="entry name" value="P-loop containing nucleotide triphosphate hydrolases"/>
    <property type="match status" value="1"/>
</dbReference>
<dbReference type="Gene3D" id="3.80.10.10">
    <property type="entry name" value="Ribonuclease Inhibitor"/>
    <property type="match status" value="4"/>
</dbReference>
<dbReference type="Gene3D" id="3.40.50.10140">
    <property type="entry name" value="Toll/interleukin-1 receptor homology (TIR) domain"/>
    <property type="match status" value="1"/>
</dbReference>
<dbReference type="InterPro" id="IPR042197">
    <property type="entry name" value="Apaf_helical"/>
</dbReference>
<dbReference type="InterPro" id="IPR045344">
    <property type="entry name" value="C-JID"/>
</dbReference>
<dbReference type="InterPro" id="IPR044974">
    <property type="entry name" value="Disease_R_plants"/>
</dbReference>
<dbReference type="InterPro" id="IPR011713">
    <property type="entry name" value="Leu-rich_rpt_3"/>
</dbReference>
<dbReference type="InterPro" id="IPR032675">
    <property type="entry name" value="LRR_dom_sf"/>
</dbReference>
<dbReference type="InterPro" id="IPR002182">
    <property type="entry name" value="NB-ARC"/>
</dbReference>
<dbReference type="InterPro" id="IPR027417">
    <property type="entry name" value="P-loop_NTPase"/>
</dbReference>
<dbReference type="InterPro" id="IPR000157">
    <property type="entry name" value="TIR_dom"/>
</dbReference>
<dbReference type="InterPro" id="IPR035897">
    <property type="entry name" value="Toll_tir_struct_dom_sf"/>
</dbReference>
<dbReference type="InterPro" id="IPR036390">
    <property type="entry name" value="WH_DNA-bd_sf"/>
</dbReference>
<dbReference type="PANTHER" id="PTHR11017:SF274">
    <property type="entry name" value="ADP-RIBOSYL CYCLASE_CYCLIC ADP-RIBOSE HYDROLASE-RELATED"/>
    <property type="match status" value="1"/>
</dbReference>
<dbReference type="PANTHER" id="PTHR11017">
    <property type="entry name" value="LEUCINE-RICH REPEAT-CONTAINING PROTEIN"/>
    <property type="match status" value="1"/>
</dbReference>
<dbReference type="Pfam" id="PF20160">
    <property type="entry name" value="C-JID"/>
    <property type="match status" value="1"/>
</dbReference>
<dbReference type="Pfam" id="PF23286">
    <property type="entry name" value="LRR_13"/>
    <property type="match status" value="1"/>
</dbReference>
<dbReference type="Pfam" id="PF07725">
    <property type="entry name" value="LRR_3"/>
    <property type="match status" value="2"/>
</dbReference>
<dbReference type="Pfam" id="PF00931">
    <property type="entry name" value="NB-ARC"/>
    <property type="match status" value="1"/>
</dbReference>
<dbReference type="Pfam" id="PF01582">
    <property type="entry name" value="TIR"/>
    <property type="match status" value="1"/>
</dbReference>
<dbReference type="Pfam" id="PF23282">
    <property type="entry name" value="WHD_ROQ1"/>
    <property type="match status" value="1"/>
</dbReference>
<dbReference type="PRINTS" id="PR00364">
    <property type="entry name" value="DISEASERSIST"/>
</dbReference>
<dbReference type="SMART" id="SM00255">
    <property type="entry name" value="TIR"/>
    <property type="match status" value="1"/>
</dbReference>
<dbReference type="SUPFAM" id="SSF52058">
    <property type="entry name" value="L domain-like"/>
    <property type="match status" value="3"/>
</dbReference>
<dbReference type="SUPFAM" id="SSF52540">
    <property type="entry name" value="P-loop containing nucleoside triphosphate hydrolases"/>
    <property type="match status" value="1"/>
</dbReference>
<dbReference type="SUPFAM" id="SSF52200">
    <property type="entry name" value="Toll/Interleukin receptor TIR domain"/>
    <property type="match status" value="1"/>
</dbReference>
<dbReference type="SUPFAM" id="SSF46785">
    <property type="entry name" value="Winged helix' DNA-binding domain"/>
    <property type="match status" value="1"/>
</dbReference>
<dbReference type="PROSITE" id="PS50104">
    <property type="entry name" value="TIR"/>
    <property type="match status" value="1"/>
</dbReference>
<accession>O23530</accession>
<keyword id="KW-0002">3D-structure</keyword>
<keyword id="KW-0007">Acetylation</keyword>
<keyword id="KW-0024">Alternative initiation</keyword>
<keyword id="KW-0067">ATP-binding</keyword>
<keyword id="KW-0963">Cytoplasm</keyword>
<keyword id="KW-0903">Direct protein sequencing</keyword>
<keyword id="KW-0256">Endoplasmic reticulum</keyword>
<keyword id="KW-0378">Hydrolase</keyword>
<keyword id="KW-0433">Leucine-rich repeat</keyword>
<keyword id="KW-0492">Microsome</keyword>
<keyword id="KW-0520">NAD</keyword>
<keyword id="KW-0547">Nucleotide-binding</keyword>
<keyword id="KW-0539">Nucleus</keyword>
<keyword id="KW-0611">Plant defense</keyword>
<keyword id="KW-1185">Reference proteome</keyword>
<keyword id="KW-0677">Repeat</keyword>
<evidence type="ECO:0000250" key="1">
    <source>
        <dbReference type="UniProtKB" id="V9M398"/>
    </source>
</evidence>
<evidence type="ECO:0000255" key="2"/>
<evidence type="ECO:0000255" key="3">
    <source>
        <dbReference type="PROSITE-ProRule" id="PRU00204"/>
    </source>
</evidence>
<evidence type="ECO:0000269" key="4">
    <source>
    </source>
</evidence>
<evidence type="ECO:0000269" key="5">
    <source>
    </source>
</evidence>
<evidence type="ECO:0000269" key="6">
    <source>
    </source>
</evidence>
<evidence type="ECO:0000269" key="7">
    <source>
    </source>
</evidence>
<evidence type="ECO:0000269" key="8">
    <source>
    </source>
</evidence>
<evidence type="ECO:0000269" key="9">
    <source>
    </source>
</evidence>
<evidence type="ECO:0000269" key="10">
    <source>
    </source>
</evidence>
<evidence type="ECO:0000269" key="11">
    <source>
    </source>
</evidence>
<evidence type="ECO:0000269" key="12">
    <source>
    </source>
</evidence>
<evidence type="ECO:0000269" key="13">
    <source>
    </source>
</evidence>
<evidence type="ECO:0000269" key="14">
    <source>
    </source>
</evidence>
<evidence type="ECO:0000269" key="15">
    <source>
    </source>
</evidence>
<evidence type="ECO:0000269" key="16">
    <source>
    </source>
</evidence>
<evidence type="ECO:0000269" key="17">
    <source>
    </source>
</evidence>
<evidence type="ECO:0000269" key="18">
    <source>
    </source>
</evidence>
<evidence type="ECO:0000303" key="19">
    <source>
    </source>
</evidence>
<evidence type="ECO:0000303" key="20">
    <source>
    </source>
</evidence>
<evidence type="ECO:0000305" key="21"/>
<evidence type="ECO:0000305" key="22">
    <source>
    </source>
</evidence>
<evidence type="ECO:0000312" key="23">
    <source>
        <dbReference type="Araport" id="AT4G16890"/>
    </source>
</evidence>
<evidence type="ECO:0000312" key="24">
    <source>
        <dbReference type="EMBL" id="CAB46044.1"/>
    </source>
</evidence>
<evidence type="ECO:0000312" key="25">
    <source>
        <dbReference type="EMBL" id="CAB80960.1"/>
    </source>
</evidence>
<evidence type="ECO:0007829" key="26">
    <source>
        <dbReference type="PDB" id="5TEC"/>
    </source>
</evidence>
<gene>
    <name evidence="19" type="primary">SNC1</name>
    <name evidence="20" type="synonym">BAL</name>
    <name evidence="23" type="ordered locus">At4g16890</name>
    <name evidence="24" type="ORF">dl4475c</name>
    <name evidence="25" type="ORF">FCAALL.51</name>
</gene>
<protein>
    <recommendedName>
        <fullName evidence="19">Protein SUPPRESSOR OF npr1-1, CONSTITUTIVE 1</fullName>
        <shortName evidence="19">AtSNC1</shortName>
    </recommendedName>
    <alternativeName>
        <fullName>Disease resistance RPP5-like protein</fullName>
    </alternativeName>
    <alternativeName>
        <fullName>Probable NAD(+) hydrolase SNC1</fullName>
        <ecNumber evidence="22">3.2.2.6</ecNumber>
    </alternativeName>
</protein>
<feature type="chain" id="PRO_0000399467" description="Protein SUPPRESSOR OF npr1-1, CONSTITUTIVE 1">
    <location>
        <begin position="1"/>
        <end position="1437"/>
    </location>
</feature>
<feature type="domain" description="TIR" evidence="3">
    <location>
        <begin position="19"/>
        <end position="182"/>
    </location>
</feature>
<feature type="repeat" description="LRR 1" evidence="2">
    <location>
        <begin position="554"/>
        <end position="576"/>
    </location>
</feature>
<feature type="repeat" description="LRR 2" evidence="2">
    <location>
        <begin position="577"/>
        <end position="598"/>
    </location>
</feature>
<feature type="repeat" description="LRR 3" evidence="2">
    <location>
        <begin position="600"/>
        <end position="621"/>
    </location>
</feature>
<feature type="repeat" description="LRR 4" evidence="2">
    <location>
        <begin position="622"/>
        <end position="645"/>
    </location>
</feature>
<feature type="repeat" description="LRR 5" evidence="2">
    <location>
        <begin position="647"/>
        <end position="668"/>
    </location>
</feature>
<feature type="repeat" description="LRR 6" evidence="2">
    <location>
        <begin position="670"/>
        <end position="691"/>
    </location>
</feature>
<feature type="repeat" description="LRR 7" evidence="2">
    <location>
        <begin position="692"/>
        <end position="715"/>
    </location>
</feature>
<feature type="repeat" description="LRR 8" evidence="2">
    <location>
        <begin position="781"/>
        <end position="805"/>
    </location>
</feature>
<feature type="repeat" description="LRR 9" evidence="2">
    <location>
        <begin position="807"/>
        <end position="828"/>
    </location>
</feature>
<feature type="repeat" description="LRR 10" evidence="2">
    <location>
        <begin position="829"/>
        <end position="851"/>
    </location>
</feature>
<feature type="repeat" description="LRR 11" evidence="2">
    <location>
        <begin position="852"/>
        <end position="875"/>
    </location>
</feature>
<feature type="repeat" description="LRR 12" evidence="2">
    <location>
        <begin position="877"/>
        <end position="895"/>
    </location>
</feature>
<feature type="repeat" description="LRR 13" evidence="2">
    <location>
        <begin position="897"/>
        <end position="918"/>
    </location>
</feature>
<feature type="repeat" description="LRR 14" evidence="2">
    <location>
        <begin position="919"/>
        <end position="939"/>
    </location>
</feature>
<feature type="repeat" description="LRR 15" evidence="2">
    <location>
        <begin position="940"/>
        <end position="962"/>
    </location>
</feature>
<feature type="repeat" description="LRR 16" evidence="2">
    <location>
        <begin position="964"/>
        <end position="985"/>
    </location>
</feature>
<feature type="repeat" description="LRR 17" evidence="2">
    <location>
        <begin position="1009"/>
        <end position="1029"/>
    </location>
</feature>
<feature type="repeat" description="LRR 18" evidence="2">
    <location>
        <begin position="1030"/>
        <end position="1052"/>
    </location>
</feature>
<feature type="repeat" description="LRR 19" evidence="2">
    <location>
        <begin position="1054"/>
        <end position="1075"/>
    </location>
</feature>
<feature type="repeat" description="LRR 20" evidence="2">
    <location>
        <begin position="1076"/>
        <end position="1096"/>
    </location>
</feature>
<feature type="repeat" description="LRR 21" evidence="2">
    <location>
        <begin position="1097"/>
        <end position="1121"/>
    </location>
</feature>
<feature type="repeat" description="LRR 22" evidence="2">
    <location>
        <begin position="1123"/>
        <end position="1143"/>
    </location>
</feature>
<feature type="repeat" description="LRR 23" evidence="2">
    <location>
        <begin position="1161"/>
        <end position="1185"/>
    </location>
</feature>
<feature type="active site" evidence="3">
    <location>
        <position position="93"/>
    </location>
</feature>
<feature type="binding site" evidence="1">
    <location>
        <begin position="28"/>
        <end position="33"/>
    </location>
    <ligand>
        <name>NAD(+)</name>
        <dbReference type="ChEBI" id="CHEBI:57540"/>
    </ligand>
</feature>
<feature type="modified residue" description="N-acetylmethionine" evidence="14">
    <location>
        <position position="1"/>
    </location>
</feature>
<feature type="splice variant" id="VSP_057982" description="In isoform 1." evidence="21">
    <location>
        <position position="1"/>
    </location>
</feature>
<feature type="mutagenesis site" description="In snc1; constitutive disease resistance." evidence="4">
    <original>E</original>
    <variation>K</variation>
    <location>
        <position position="561"/>
    </location>
</feature>
<feature type="strand" evidence="26">
    <location>
        <begin position="21"/>
        <end position="26"/>
    </location>
</feature>
<feature type="helix" evidence="26">
    <location>
        <begin position="29"/>
        <end position="32"/>
    </location>
</feature>
<feature type="turn" evidence="26">
    <location>
        <begin position="33"/>
        <end position="35"/>
    </location>
</feature>
<feature type="helix" evidence="26">
    <location>
        <begin position="36"/>
        <end position="45"/>
    </location>
</feature>
<feature type="turn" evidence="26">
    <location>
        <begin position="46"/>
        <end position="48"/>
    </location>
</feature>
<feature type="turn" evidence="26">
    <location>
        <begin position="68"/>
        <end position="72"/>
    </location>
</feature>
<feature type="strand" evidence="26">
    <location>
        <begin position="73"/>
        <end position="80"/>
    </location>
</feature>
<feature type="helix" evidence="26">
    <location>
        <begin position="84"/>
        <end position="86"/>
    </location>
</feature>
<feature type="helix" evidence="26">
    <location>
        <begin position="88"/>
        <end position="104"/>
    </location>
</feature>
<feature type="strand" evidence="26">
    <location>
        <begin position="107"/>
        <end position="115"/>
    </location>
</feature>
<feature type="helix" evidence="26">
    <location>
        <begin position="117"/>
        <end position="122"/>
    </location>
</feature>
<feature type="helix" evidence="26">
    <location>
        <begin position="125"/>
        <end position="135"/>
    </location>
</feature>
<feature type="helix" evidence="26">
    <location>
        <begin position="140"/>
        <end position="154"/>
    </location>
</feature>
<feature type="helix" evidence="26">
    <location>
        <begin position="161"/>
        <end position="163"/>
    </location>
</feature>
<feature type="helix" evidence="26">
    <location>
        <begin position="167"/>
        <end position="182"/>
    </location>
</feature>
<feature type="modified residue" description="N-acetylmethionine" evidence="14">
    <location sequence="O23530-1">
        <position position="1"/>
    </location>
</feature>
<proteinExistence type="evidence at protein level"/>
<name>SNC1_ARATH</name>
<reference key="1">
    <citation type="journal article" date="2010" name="PLoS Pathog.">
        <title>The Arabidopsis resistance-like gene SNC1 is activated by mutations in SRFR1 and contributes to resistance to the bacterial effector AvrRps4.</title>
        <authorList>
            <person name="Kim S.H."/>
            <person name="Gao F."/>
            <person name="Bhattacharjee S."/>
            <person name="Adiasor J.A."/>
            <person name="Nam J.C."/>
            <person name="Gassmann W."/>
        </authorList>
    </citation>
    <scope>NUCLEOTIDE SEQUENCE [MRNA] (ISOFORM 1)</scope>
    <scope>SUBCELLULAR LOCATION</scope>
    <scope>INTERACTION WITH SRFR1</scope>
</reference>
<reference key="2">
    <citation type="journal article" date="1998" name="Nature">
        <title>Analysis of 1.9 Mb of contiguous sequence from chromosome 4 of Arabidopsis thaliana.</title>
        <authorList>
            <person name="Bevan M."/>
            <person name="Bancroft I."/>
            <person name="Bent E."/>
            <person name="Love K."/>
            <person name="Goodman H.M."/>
            <person name="Dean C."/>
            <person name="Bergkamp R."/>
            <person name="Dirkse W."/>
            <person name="van Staveren M."/>
            <person name="Stiekema W."/>
            <person name="Drost L."/>
            <person name="Ridley P."/>
            <person name="Hudson S.-A."/>
            <person name="Patel K."/>
            <person name="Murphy G."/>
            <person name="Piffanelli P."/>
            <person name="Wedler H."/>
            <person name="Wedler E."/>
            <person name="Wambutt R."/>
            <person name="Weitzenegger T."/>
            <person name="Pohl T."/>
            <person name="Terryn N."/>
            <person name="Gielen J."/>
            <person name="Villarroel R."/>
            <person name="De Clercq R."/>
            <person name="van Montagu M."/>
            <person name="Lecharny A."/>
            <person name="Aubourg S."/>
            <person name="Gy I."/>
            <person name="Kreis M."/>
            <person name="Lao N."/>
            <person name="Kavanagh T."/>
            <person name="Hempel S."/>
            <person name="Kotter P."/>
            <person name="Entian K.-D."/>
            <person name="Rieger M."/>
            <person name="Schaefer M."/>
            <person name="Funk B."/>
            <person name="Mueller-Auer S."/>
            <person name="Silvey M."/>
            <person name="James R."/>
            <person name="Monfort A."/>
            <person name="Pons A."/>
            <person name="Puigdomenech P."/>
            <person name="Douka A."/>
            <person name="Voukelatou E."/>
            <person name="Milioni D."/>
            <person name="Hatzopoulos P."/>
            <person name="Piravandi E."/>
            <person name="Obermaier B."/>
            <person name="Hilbert H."/>
            <person name="Duesterhoeft A."/>
            <person name="Moores T."/>
            <person name="Jones J.D.G."/>
            <person name="Eneva T."/>
            <person name="Palme K."/>
            <person name="Benes V."/>
            <person name="Rechmann S."/>
            <person name="Ansorge W."/>
            <person name="Cooke R."/>
            <person name="Berger C."/>
            <person name="Delseny M."/>
            <person name="Voet M."/>
            <person name="Volckaert G."/>
            <person name="Mewes H.-W."/>
            <person name="Klosterman S."/>
            <person name="Schueller C."/>
            <person name="Chalwatzis N."/>
        </authorList>
    </citation>
    <scope>NUCLEOTIDE SEQUENCE [LARGE SCALE GENOMIC DNA]</scope>
    <source>
        <strain>cv. Columbia</strain>
    </source>
</reference>
<reference key="3">
    <citation type="journal article" date="1999" name="Nature">
        <title>Sequence and analysis of chromosome 4 of the plant Arabidopsis thaliana.</title>
        <authorList>
            <person name="Mayer K.F.X."/>
            <person name="Schueller C."/>
            <person name="Wambutt R."/>
            <person name="Murphy G."/>
            <person name="Volckaert G."/>
            <person name="Pohl T."/>
            <person name="Duesterhoeft A."/>
            <person name="Stiekema W."/>
            <person name="Entian K.-D."/>
            <person name="Terryn N."/>
            <person name="Harris B."/>
            <person name="Ansorge W."/>
            <person name="Brandt P."/>
            <person name="Grivell L.A."/>
            <person name="Rieger M."/>
            <person name="Weichselgartner M."/>
            <person name="de Simone V."/>
            <person name="Obermaier B."/>
            <person name="Mache R."/>
            <person name="Mueller M."/>
            <person name="Kreis M."/>
            <person name="Delseny M."/>
            <person name="Puigdomenech P."/>
            <person name="Watson M."/>
            <person name="Schmidtheini T."/>
            <person name="Reichert B."/>
            <person name="Portetelle D."/>
            <person name="Perez-Alonso M."/>
            <person name="Boutry M."/>
            <person name="Bancroft I."/>
            <person name="Vos P."/>
            <person name="Hoheisel J."/>
            <person name="Zimmermann W."/>
            <person name="Wedler H."/>
            <person name="Ridley P."/>
            <person name="Langham S.-A."/>
            <person name="McCullagh B."/>
            <person name="Bilham L."/>
            <person name="Robben J."/>
            <person name="van der Schueren J."/>
            <person name="Grymonprez B."/>
            <person name="Chuang Y.-J."/>
            <person name="Vandenbussche F."/>
            <person name="Braeken M."/>
            <person name="Weltjens I."/>
            <person name="Voet M."/>
            <person name="Bastiaens I."/>
            <person name="Aert R."/>
            <person name="Defoor E."/>
            <person name="Weitzenegger T."/>
            <person name="Bothe G."/>
            <person name="Ramsperger U."/>
            <person name="Hilbert H."/>
            <person name="Braun M."/>
            <person name="Holzer E."/>
            <person name="Brandt A."/>
            <person name="Peters S."/>
            <person name="van Staveren M."/>
            <person name="Dirkse W."/>
            <person name="Mooijman P."/>
            <person name="Klein Lankhorst R."/>
            <person name="Rose M."/>
            <person name="Hauf J."/>
            <person name="Koetter P."/>
            <person name="Berneiser S."/>
            <person name="Hempel S."/>
            <person name="Feldpausch M."/>
            <person name="Lamberth S."/>
            <person name="Van den Daele H."/>
            <person name="De Keyser A."/>
            <person name="Buysshaert C."/>
            <person name="Gielen J."/>
            <person name="Villarroel R."/>
            <person name="De Clercq R."/>
            <person name="van Montagu M."/>
            <person name="Rogers J."/>
            <person name="Cronin A."/>
            <person name="Quail M.A."/>
            <person name="Bray-Allen S."/>
            <person name="Clark L."/>
            <person name="Doggett J."/>
            <person name="Hall S."/>
            <person name="Kay M."/>
            <person name="Lennard N."/>
            <person name="McLay K."/>
            <person name="Mayes R."/>
            <person name="Pettett A."/>
            <person name="Rajandream M.A."/>
            <person name="Lyne M."/>
            <person name="Benes V."/>
            <person name="Rechmann S."/>
            <person name="Borkova D."/>
            <person name="Bloecker H."/>
            <person name="Scharfe M."/>
            <person name="Grimm M."/>
            <person name="Loehnert T.-H."/>
            <person name="Dose S."/>
            <person name="de Haan M."/>
            <person name="Maarse A.C."/>
            <person name="Schaefer M."/>
            <person name="Mueller-Auer S."/>
            <person name="Gabel C."/>
            <person name="Fuchs M."/>
            <person name="Fartmann B."/>
            <person name="Granderath K."/>
            <person name="Dauner D."/>
            <person name="Herzl A."/>
            <person name="Neumann S."/>
            <person name="Argiriou A."/>
            <person name="Vitale D."/>
            <person name="Liguori R."/>
            <person name="Piravandi E."/>
            <person name="Massenet O."/>
            <person name="Quigley F."/>
            <person name="Clabauld G."/>
            <person name="Muendlein A."/>
            <person name="Felber R."/>
            <person name="Schnabl S."/>
            <person name="Hiller R."/>
            <person name="Schmidt W."/>
            <person name="Lecharny A."/>
            <person name="Aubourg S."/>
            <person name="Chefdor F."/>
            <person name="Cooke R."/>
            <person name="Berger C."/>
            <person name="Monfort A."/>
            <person name="Casacuberta E."/>
            <person name="Gibbons T."/>
            <person name="Weber N."/>
            <person name="Vandenbol M."/>
            <person name="Bargues M."/>
            <person name="Terol J."/>
            <person name="Torres A."/>
            <person name="Perez-Perez A."/>
            <person name="Purnelle B."/>
            <person name="Bent E."/>
            <person name="Johnson S."/>
            <person name="Tacon D."/>
            <person name="Jesse T."/>
            <person name="Heijnen L."/>
            <person name="Schwarz S."/>
            <person name="Scholler P."/>
            <person name="Heber S."/>
            <person name="Francs P."/>
            <person name="Bielke C."/>
            <person name="Frishman D."/>
            <person name="Haase D."/>
            <person name="Lemcke K."/>
            <person name="Mewes H.-W."/>
            <person name="Stocker S."/>
            <person name="Zaccaria P."/>
            <person name="Bevan M."/>
            <person name="Wilson R.K."/>
            <person name="de la Bastide M."/>
            <person name="Habermann K."/>
            <person name="Parnell L."/>
            <person name="Dedhia N."/>
            <person name="Gnoj L."/>
            <person name="Schutz K."/>
            <person name="Huang E."/>
            <person name="Spiegel L."/>
            <person name="Sekhon M."/>
            <person name="Murray J."/>
            <person name="Sheet P."/>
            <person name="Cordes M."/>
            <person name="Abu-Threideh J."/>
            <person name="Stoneking T."/>
            <person name="Kalicki J."/>
            <person name="Graves T."/>
            <person name="Harmon G."/>
            <person name="Edwards J."/>
            <person name="Latreille P."/>
            <person name="Courtney L."/>
            <person name="Cloud J."/>
            <person name="Abbott A."/>
            <person name="Scott K."/>
            <person name="Johnson D."/>
            <person name="Minx P."/>
            <person name="Bentley D."/>
            <person name="Fulton B."/>
            <person name="Miller N."/>
            <person name="Greco T."/>
            <person name="Kemp K."/>
            <person name="Kramer J."/>
            <person name="Fulton L."/>
            <person name="Mardis E."/>
            <person name="Dante M."/>
            <person name="Pepin K."/>
            <person name="Hillier L.W."/>
            <person name="Nelson J."/>
            <person name="Spieth J."/>
            <person name="Ryan E."/>
            <person name="Andrews S."/>
            <person name="Geisel C."/>
            <person name="Layman D."/>
            <person name="Du H."/>
            <person name="Ali J."/>
            <person name="Berghoff A."/>
            <person name="Jones K."/>
            <person name="Drone K."/>
            <person name="Cotton M."/>
            <person name="Joshu C."/>
            <person name="Antonoiu B."/>
            <person name="Zidanic M."/>
            <person name="Strong C."/>
            <person name="Sun H."/>
            <person name="Lamar B."/>
            <person name="Yordan C."/>
            <person name="Ma P."/>
            <person name="Zhong J."/>
            <person name="Preston R."/>
            <person name="Vil D."/>
            <person name="Shekher M."/>
            <person name="Matero A."/>
            <person name="Shah R."/>
            <person name="Swaby I.K."/>
            <person name="O'Shaughnessy A."/>
            <person name="Rodriguez M."/>
            <person name="Hoffman J."/>
            <person name="Till S."/>
            <person name="Granat S."/>
            <person name="Shohdy N."/>
            <person name="Hasegawa A."/>
            <person name="Hameed A."/>
            <person name="Lodhi M."/>
            <person name="Johnson A."/>
            <person name="Chen E."/>
            <person name="Marra M.A."/>
            <person name="Martienssen R."/>
            <person name="McCombie W.R."/>
        </authorList>
    </citation>
    <scope>NUCLEOTIDE SEQUENCE [LARGE SCALE GENOMIC DNA]</scope>
    <source>
        <strain>cv. Columbia</strain>
    </source>
</reference>
<reference key="4">
    <citation type="journal article" date="2017" name="Plant J.">
        <title>Araport11: a complete reannotation of the Arabidopsis thaliana reference genome.</title>
        <authorList>
            <person name="Cheng C.Y."/>
            <person name="Krishnakumar V."/>
            <person name="Chan A.P."/>
            <person name="Thibaud-Nissen F."/>
            <person name="Schobel S."/>
            <person name="Town C.D."/>
        </authorList>
    </citation>
    <scope>GENOME REANNOTATION</scope>
    <source>
        <strain>cv. Columbia</strain>
    </source>
</reference>
<reference key="5">
    <citation type="journal article" date="2003" name="Plant Cell">
        <title>A gain-of-function mutation in a plant disease resistance gene leads to constitutive activation of downstream signal transduction pathways in suppressor of npr1-1, constitutive 1.</title>
        <authorList>
            <person name="Zhang Y."/>
            <person name="Goritschnig S."/>
            <person name="Dong X."/>
            <person name="Li X."/>
        </authorList>
    </citation>
    <scope>FUNCTION</scope>
    <scope>MUTAGENESIS OF GLU-561</scope>
</reference>
<reference key="6">
    <citation type="journal article" date="2004" name="Plant Cell">
        <title>A haplotype-specific Resistance gene regulated by BONZAI1 mediates temperature-dependent growth control in Arabidopsis.</title>
        <authorList>
            <person name="Yang S."/>
            <person name="Hua J."/>
        </authorList>
    </citation>
    <scope>IDENTIFICATION</scope>
    <scope>REGULATION</scope>
    <scope>INDUCTION BY SALICYLIC ACID AND HEAT</scope>
    <source>
        <strain>cv. Columbia</strain>
        <strain>cv. Landsberg erecta</strain>
        <strain>cv. No-0</strain>
        <strain>cv. Wassilewskija</strain>
    </source>
</reference>
<reference key="7">
    <citation type="journal article" date="2007" name="Mol. Plant Microbe Interact.">
        <title>The TIR-NB-LRR gene SNC1 is regulated at the transcript level by multiple factors.</title>
        <authorList>
            <person name="Li Y."/>
            <person name="Yang S."/>
            <person name="Yang H."/>
            <person name="Hua J."/>
        </authorList>
    </citation>
    <scope>REGULATION</scope>
</reference>
<reference key="8">
    <citation type="journal article" date="2007" name="Plant Cell">
        <title>A cluster of disease resistance genes in Arabidopsis is coordinately regulated by transcriptional activation and RNA silencing.</title>
        <authorList>
            <person name="Yi H."/>
            <person name="Richards E.J."/>
        </authorList>
    </citation>
    <scope>REGULATION BY SILENCING</scope>
</reference>
<reference key="9">
    <citation type="journal article" date="2009" name="Genetics">
        <title>Gene duplication and hypermutation of the pathogen Resistance gene SNC1 in the Arabidopsis bal variant.</title>
        <authorList>
            <person name="Yi H."/>
            <person name="Richards E.J."/>
        </authorList>
    </citation>
    <scope>REGULATION</scope>
</reference>
<reference key="10">
    <citation type="journal article" date="2010" name="Plant Cell">
        <title>Endosome-associated CRT1 functions early in resistance gene-mediated defense signaling in Arabidopsis and tobacco.</title>
        <authorList>
            <person name="Kang H.-G."/>
            <person name="Oh C.-S."/>
            <person name="Sato M."/>
            <person name="Katagiri F."/>
            <person name="Glazebrook J."/>
            <person name="Takahashi H."/>
            <person name="Kachroo P."/>
            <person name="Martin G.B."/>
            <person name="Klessig D.F."/>
        </authorList>
    </citation>
    <scope>INTERACTION WITH MORC1/CRT1</scope>
</reference>
<reference key="11">
    <citation type="journal article" date="2010" name="Proc. Natl. Acad. Sci. U.S.A.">
        <title>Arabidopsis resistance protein SNC1 activates immune responses through association with a transcriptional corepressor.</title>
        <authorList>
            <person name="Zhu Z."/>
            <person name="Xu F."/>
            <person name="Zhang Y."/>
            <person name="Cheng Y.T."/>
            <person name="Wiermer M."/>
            <person name="Li X."/>
            <person name="Zhang Y."/>
        </authorList>
    </citation>
    <scope>FUNCTION</scope>
    <scope>INTERACTION WITH TPR1</scope>
</reference>
<reference key="12">
    <citation type="journal article" date="2010" name="Plant Physiol.">
        <title>Regulation of the expression of plant Resistance gene SNC1 by a protein with a conserved BAT2 domain.</title>
        <authorList>
            <person name="Li Y."/>
            <person name="Tessaro M.J."/>
            <person name="Li X."/>
            <person name="Zhang Y."/>
        </authorList>
    </citation>
    <scope>REGULATION</scope>
</reference>
<reference key="13">
    <citation type="journal article" date="2011" name="Science">
        <title>Pathogen effectors target Arabidopsis EDS1 and alter its interactions with immune regulators.</title>
        <authorList>
            <person name="Bhattacharjee S."/>
            <person name="Halane M.K."/>
            <person name="Kim S.H."/>
            <person name="Gassmann W."/>
        </authorList>
    </citation>
    <scope>INTERACTION WITH EDS1</scope>
</reference>
<reference key="14">
    <citation type="journal article" date="2012" name="Plant Cell">
        <title>Abscisic acid deficiency antagonizes high-temperature inhibition of disease resistance through enhancing nuclear accumulation of resistance proteins SNC1 and RPS4 in Arabidopsis.</title>
        <authorList>
            <person name="Mang H.G."/>
            <person name="Qian W."/>
            <person name="Zhu Y."/>
            <person name="Qian J."/>
            <person name="Kang H.G."/>
            <person name="Klessig D.F."/>
            <person name="Hua J."/>
        </authorList>
    </citation>
    <scope>FUNCTION</scope>
    <scope>SUBCELLULAR LOCATION</scope>
    <scope>TISSUE SPECIFICITY</scope>
</reference>
<reference key="15">
    <citation type="journal article" date="2012" name="Plant J.">
        <title>The cyclin L homolog MOS12 and the MOS4-associated complex are required for the proper splicing of plant resistance genes.</title>
        <authorList>
            <person name="Xu F."/>
            <person name="Xu S."/>
            <person name="Wiermer M."/>
            <person name="Zhang Y."/>
            <person name="Li X."/>
        </authorList>
    </citation>
    <scope>MISCELLANEOUS</scope>
</reference>
<reference key="16">
    <citation type="journal article" date="2013" name="Plant Signal. Behav.">
        <title>MOS2 has redundant function with its homolog MOS2H and is required for proper splicing of SNC1.</title>
        <authorList>
            <person name="Copeland C."/>
            <person name="Xu S."/>
            <person name="Qi Y."/>
            <person name="Li X."/>
        </authorList>
    </citation>
    <scope>MISCELLANEOUS</scope>
</reference>
<reference key="17">
    <citation type="journal article" date="2014" name="Plant J.">
        <title>HSP90s are required for NLR immune receptor accumulation in Arabidopsis.</title>
        <authorList>
            <person name="Huang S."/>
            <person name="Monaghan J."/>
            <person name="Zhong X."/>
            <person name="Lin L."/>
            <person name="Sun T."/>
            <person name="Dong O.X."/>
            <person name="Li X."/>
        </authorList>
    </citation>
    <scope>INTERACTION WITH HSP90-3</scope>
</reference>
<reference key="18">
    <citation type="journal article" date="2015" name="Plant Cell">
        <title>Two N-terminal acetyltransferases antagonistically regulate the stability of a nod-like receptor in Arabidopsis.</title>
        <authorList>
            <person name="Xu F."/>
            <person name="Huang Y."/>
            <person name="Li L."/>
            <person name="Gannon P."/>
            <person name="Linster E."/>
            <person name="Huber M."/>
            <person name="Kapos P."/>
            <person name="Bienvenut W."/>
            <person name="Polevoda B."/>
            <person name="Meinnel T."/>
            <person name="Hell R."/>
            <person name="Giglione C."/>
            <person name="Zhang Y."/>
            <person name="Wirtz M."/>
            <person name="Chen S."/>
            <person name="Li X."/>
        </authorList>
    </citation>
    <scope>PARTIAL PROTEIN SEQUENCE (ISOFORMS 1 AND 2)</scope>
    <scope>ALTERNATIVE INITIATION</scope>
    <scope>IDENTIFICATION BY MASS SPECTROMETRY</scope>
    <scope>ACETYLATION AT MET-1</scope>
    <scope>ACETYLATION AT MET-1 (ISOFORM 2)</scope>
</reference>
<reference key="19">
    <citation type="journal article" date="2016" name="Cell Host Microbe">
        <title>Plant TRAF proteins regulate NLR immune receptor turnover.</title>
        <authorList>
            <person name="Huang S."/>
            <person name="Chen X."/>
            <person name="Zhong X."/>
            <person name="Li M."/>
            <person name="Ao K."/>
            <person name="Huang J."/>
            <person name="Li X."/>
        </authorList>
    </citation>
    <scope>INTERACTION WITH TRAF1B</scope>
</reference>
<reference key="20">
    <citation type="journal article" date="2017" name="New Phytol.">
        <title>Arabidopsis ZED1-related kinases mediate the temperature-sensitive intersection of immune response and growth homeostasis.</title>
        <authorList>
            <person name="Wang Z."/>
            <person name="Cui D."/>
            <person name="Liu J."/>
            <person name="Zhao J."/>
            <person name="Liu C."/>
            <person name="Xin W."/>
            <person name="Li Y."/>
            <person name="Liu N."/>
            <person name="Ren D."/>
            <person name="Tang D."/>
            <person name="Hu Y."/>
        </authorList>
    </citation>
    <scope>DISRUPTION PHENOTYPE</scope>
    <scope>REPRESSION BY ZED1</scope>
    <source>
        <strain>cv. Columbia</strain>
        <strain>cv. Landsberg erecta</strain>
    </source>
</reference>
<reference key="21">
    <citation type="journal article" date="2019" name="Science">
        <title>NAD+ cleavage activity by animal and plant TIR domains in cell death pathways.</title>
        <authorList>
            <person name="Horsefield S."/>
            <person name="Burdett H."/>
            <person name="Zhang X."/>
            <person name="Manik M.K."/>
            <person name="Shi Y."/>
            <person name="Chen J."/>
            <person name="Qi T."/>
            <person name="Gilley J."/>
            <person name="Lai J.S."/>
            <person name="Rank M.X."/>
            <person name="Casey L.W."/>
            <person name="Gu W."/>
            <person name="Ericsson D.J."/>
            <person name="Foley G."/>
            <person name="Hughes R.O."/>
            <person name="Bosanac T."/>
            <person name="von Itzstein M."/>
            <person name="Rathjen J.P."/>
            <person name="Nanson J.D."/>
            <person name="Boden M."/>
            <person name="Dry I.B."/>
            <person name="Williams S.J."/>
            <person name="Staskawicz B.J."/>
            <person name="Coleman M.P."/>
            <person name="Ve T."/>
            <person name="Dodds P.N."/>
            <person name="Kobe B."/>
        </authorList>
    </citation>
    <scope>FUNCTION</scope>
    <scope>CATALYTIC ACTIVITY</scope>
</reference>
<reference key="22">
    <citation type="journal article" date="2016" name="Biochem. Biophys. Res. Commun.">
        <title>Crystal structure of Arabidopsis thaliana SNC1 TIR domain.</title>
        <authorList>
            <person name="Hyun K.G."/>
            <person name="Lee Y."/>
            <person name="Yoon J."/>
            <person name="Yi H."/>
            <person name="Song J.J."/>
        </authorList>
    </citation>
    <scope>X-RAY CRYSTALLOGRAPHY (2.60 ANGSTROMS) OF 17-190</scope>
    <scope>SUBUNIT</scope>
</reference>
<comment type="function">
    <text evidence="4 7 11 18">Disease resistance protein of the TIR-NB-LRR-type (PubMed:14576290). Part of the RPP5 locus that contains a cluster of several paralogous disease resistance (R) genes (PubMed:14576290). Resistance proteins guard the plant against pathogens that contain an appropriate avirulence protein via an indirect interaction with this avirulence protein (PubMed:14576290). That triggers a defense system including the hypersensitive response, which restricts the pathogen growth (PubMed:14576290). Probably acts as a NAD(+) hydrolase (NADase): in response to activation, catalyzes cleavage of NAD(+) into ADP-D-ribose (ADPR) and nicotinamide; NAD(+) cleavage triggering a defense system that promotes cell death (PubMed:31439792). Expression regulated by MOS1 at chromatin level (PubMed:20647385). Nuclear localization of SNC1 is essential for its activity (PubMed:22454454). ABA deficiency can rescue high-temperature inhibition of SNC1-mediated defense responses (PubMed:22454454).</text>
</comment>
<comment type="catalytic activity">
    <reaction evidence="22">
        <text>NAD(+) + H2O = ADP-D-ribose + nicotinamide + H(+)</text>
        <dbReference type="Rhea" id="RHEA:16301"/>
        <dbReference type="ChEBI" id="CHEBI:15377"/>
        <dbReference type="ChEBI" id="CHEBI:15378"/>
        <dbReference type="ChEBI" id="CHEBI:17154"/>
        <dbReference type="ChEBI" id="CHEBI:57540"/>
        <dbReference type="ChEBI" id="CHEBI:57967"/>
        <dbReference type="EC" id="3.2.2.6"/>
    </reaction>
    <physiologicalReaction direction="left-to-right" evidence="22">
        <dbReference type="Rhea" id="RHEA:16302"/>
    </physiologicalReaction>
</comment>
<comment type="subunit">
    <text evidence="6 7 8 9 13 15 16">Homodimer (PubMed:27818198). Interacts (via TIR domain) with TPR1 (PubMed:20647385). Interacts with EDS1 (PubMed:22158819). Interacts with SRFR1 (PubMed:21079790). Interacts with HSP90-3 (PubMed:24889324). Binds to MORC1/CRT1 (PubMed:20332379). Interacts with TRAF1B (PubMed:26867179).</text>
</comment>
<comment type="interaction">
    <interactant intactId="EBI-15866586">
        <id>O23530</id>
    </interactant>
    <interactant intactId="EBI-15941797">
        <id>Q9SU30</id>
        <label>CPR1</label>
    </interactant>
    <organismsDiffer>false</organismsDiffer>
    <experiments>2</experiments>
</comment>
<comment type="interaction">
    <interactant intactId="EBI-15866586">
        <id>O23530</id>
    </interactant>
    <interactant intactId="EBI-15866619">
        <id>Q0WV90</id>
        <label>TPR1</label>
    </interactant>
    <organismsDiffer>false</organismsDiffer>
    <experiments>2</experiments>
</comment>
<comment type="interaction">
    <interactant intactId="EBI-15866586">
        <id>O23530</id>
    </interactant>
    <interactant intactId="EBI-1541543">
        <id>P59263</id>
        <label>UBQ16</label>
    </interactant>
    <organismsDiffer>false</organismsDiffer>
    <experiments>2</experiments>
</comment>
<comment type="subcellular location">
    <subcellularLocation>
        <location evidence="8">Cytoplasm</location>
    </subcellularLocation>
    <subcellularLocation>
        <location evidence="8">Microsome</location>
    </subcellularLocation>
    <subcellularLocation>
        <location evidence="8 11">Nucleus</location>
    </subcellularLocation>
    <text evidence="8 11">Restricted to microsomes when interacting with SRFR1. Accumulates in nucleus at 22 degrees Celsius, but not at 28 degrees Celsius. Nuclear accumulation is enhanced by abscisic acid deficiency.</text>
</comment>
<comment type="alternative products">
    <event type="alternative initiation"/>
    <isoform>
        <id>O23530-2</id>
        <name>2</name>
        <sequence type="displayed"/>
    </isoform>
    <isoform>
        <id>O23530-1</id>
        <name>1</name>
        <sequence type="described" ref="VSP_057982"/>
    </isoform>
    <text>A number of isoforms are produced. According to EST sequences.</text>
</comment>
<comment type="tissue specificity">
    <text evidence="11">Expressed in guard cells and epidermal cells, but not detected in mesophyll cells.</text>
</comment>
<comment type="induction">
    <text evidence="5 17">Up-regulated by salicylic acid and in mutants defective in RNA silencing. Down-regulated by high temperature. Repressed by ZED1 in the absence of pathogens in an ambient temperature-sensitive manner (PubMed:28499073).</text>
</comment>
<comment type="domain">
    <text evidence="3">The TIR domain mediates NAD(+) hydrolase (NADase) activity. Self-association of TIR domains is required for NADase activity.</text>
</comment>
<comment type="PTM">
    <molecule>Isoform 2</molecule>
    <text evidence="14">Met-1 is specifically acetylated by N-terminal acetyltransferase complex A (NatA). The NatA-mediated acetylation serves as a degradation signal.</text>
</comment>
<comment type="PTM">
    <molecule>Isoform 1</molecule>
    <text evidence="14">Met-1 is specifically acetylated by N-terminal acetyltransferase complex B (NatB). The NatB-mediated acetylation stabilizes SNC1.</text>
</comment>
<comment type="disruption phenotype">
    <text evidence="17">Impaired disease resistance responses.</text>
</comment>
<comment type="miscellaneous">
    <text>A gain-of-function mutant in SNC1 resulting from a point mutation leads to a dwarf and curled-leaf phenotype and a constitutive disease resistance in the absence of cell death.</text>
</comment>
<comment type="miscellaneous">
    <text>The phenotypically unstable bal phenotype is caused by a duplication of the locus carrying SNC1 followed by a hypermutation of the gene.</text>
</comment>
<comment type="miscellaneous">
    <text>SNC1 is not found in cv. Landsberg erecta, cv. No-0, and cv. Wassilewskija and is probably unique to cv. Columbia (PubMed:15031411). Cv. RLD encodes a non-functional truncated SNC1 protein lacking most of the LRR domain (PubMed:21079790).</text>
</comment>
<comment type="miscellaneous">
    <text evidence="10 12">MOS2, MOS2H, MOS12 and the MOS4-associated complex (MAC) are required for the proper splicing of R genes and contribute in the alternative splicing of SNC1.</text>
</comment>
<comment type="similarity">
    <text evidence="21">Belongs to the disease resistance TIR-NB-LRR family.</text>
</comment>
<comment type="sequence caution" evidence="21">
    <conflict type="erroneous gene model prediction">
        <sequence resource="EMBL-CDS" id="CAB46044"/>
    </conflict>
</comment>
<comment type="sequence caution" evidence="21">
    <conflict type="erroneous gene model prediction">
        <sequence resource="EMBL-CDS" id="CAB80960"/>
    </conflict>
</comment>